<protein>
    <recommendedName>
        <fullName>Chondroitinase-AC</fullName>
        <ecNumber>4.2.2.5</ecNumber>
    </recommendedName>
    <alternativeName>
        <fullName>Chondroitin sulfate AC lyase</fullName>
    </alternativeName>
    <alternativeName>
        <fullName>Chondroitin-AC eliminase</fullName>
    </alternativeName>
    <alternativeName>
        <fullName>Chondroitin-AC lyase</fullName>
    </alternativeName>
</protein>
<organism>
    <name type="scientific">Pedobacter heparinus (strain ATCC 13125 / DSM 2366 / CIP 104194 / JCM 7457 / NBRC 12017 / NCIMB 9290 / NRRL B-14731 / HIM 762-3)</name>
    <dbReference type="NCBI Taxonomy" id="485917"/>
    <lineage>
        <taxon>Bacteria</taxon>
        <taxon>Pseudomonadati</taxon>
        <taxon>Bacteroidota</taxon>
        <taxon>Sphingobacteriia</taxon>
        <taxon>Sphingobacteriales</taxon>
        <taxon>Sphingobacteriaceae</taxon>
        <taxon>Pedobacter</taxon>
    </lineage>
</organism>
<evidence type="ECO:0000305" key="1"/>
<evidence type="ECO:0007829" key="2">
    <source>
        <dbReference type="PDB" id="1CB8"/>
    </source>
</evidence>
<evidence type="ECO:0007829" key="3">
    <source>
        <dbReference type="PDB" id="1HM2"/>
    </source>
</evidence>
<reference key="1">
    <citation type="journal article" date="2000" name="Appl. Environ. Microbiol.">
        <title>Isolation and expression in Escherichia coli of cslA and cslB, genes coding for the chondroitin sulfate-degrading enzymes chondroitinase AC and chondroitinase B, respectively, from Flavobacterium heparinum.</title>
        <authorList>
            <person name="Tkalec A.L."/>
            <person name="Fink D."/>
            <person name="Blain F."/>
            <person name="Zhang-Sun G."/>
            <person name="Laliberte M."/>
            <person name="Bennett D.C."/>
            <person name="Gu K."/>
            <person name="Zimmermann J.J.F."/>
            <person name="Su H."/>
        </authorList>
    </citation>
    <scope>NUCLEOTIDE SEQUENCE [GENOMIC DNA]</scope>
</reference>
<reference key="2">
    <citation type="journal article" date="2009" name="Stand. Genomic Sci.">
        <title>Complete genome sequence of Pedobacter heparinus type strain (HIM 762-3).</title>
        <authorList>
            <person name="Han C."/>
            <person name="Spring S."/>
            <person name="Lapidus A."/>
            <person name="Del Rio T.G."/>
            <person name="Tice H."/>
            <person name="Copeland A."/>
            <person name="Cheng J.F."/>
            <person name="Lucas S."/>
            <person name="Chen F."/>
            <person name="Nolan M."/>
            <person name="Bruce D."/>
            <person name="Goodwin L."/>
            <person name="Pitluck S."/>
            <person name="Ivanova N."/>
            <person name="Mavromatis K."/>
            <person name="Mikhailova N."/>
            <person name="Pati A."/>
            <person name="Chen A."/>
            <person name="Palaniappan K."/>
            <person name="Land M."/>
            <person name="Hauser L."/>
            <person name="Chang Y.J."/>
            <person name="Jeffries C.C."/>
            <person name="Saunders E."/>
            <person name="Chertkov O."/>
            <person name="Brettin T."/>
            <person name="Goker M."/>
            <person name="Rohde M."/>
            <person name="Bristow J."/>
            <person name="Eisen J.A."/>
            <person name="Markowitz V."/>
            <person name="Hugenholtz P."/>
            <person name="Kyrpides N.C."/>
            <person name="Klenk H.P."/>
            <person name="Detter J.C."/>
        </authorList>
    </citation>
    <scope>NUCLEOTIDE SEQUENCE [LARGE SCALE GENOMIC DNA]</scope>
    <source>
        <strain>ATCC 13125 / DSM 2366 / CIP 104194 / JCM 7457 / NBRC 12017 / NCIMB 9290 / NRRL B-14731 / HIM 762-3</strain>
    </source>
</reference>
<reference key="3">
    <citation type="journal article" date="1999" name="J. Mol. Biol.">
        <title>Crystal structure of chondroitin AC lyase, a representative of a family of glycosaminoglycan degrading enzymes.</title>
        <authorList>
            <person name="Fethiere J."/>
            <person name="Eggimann B."/>
            <person name="Cygler M."/>
        </authorList>
    </citation>
    <scope>X-RAY CRYSTALLOGRAPHY (1.9 ANGSTROMS)</scope>
</reference>
<reference key="4">
    <citation type="journal article" date="2001" name="Biochemistry">
        <title>Active site of chondroitin AC lyase revealed by the structure of enzyme-oligosaccharide complexes and mutagenesis.</title>
        <authorList>
            <person name="Huang W."/>
            <person name="Boju L."/>
            <person name="Tkalec A.L."/>
            <person name="Su H."/>
            <person name="Yang H.O."/>
            <person name="Gunay N.S."/>
            <person name="Linhardt R.J."/>
            <person name="Kim Y.S."/>
            <person name="Matte A."/>
            <person name="Cygler M."/>
        </authorList>
    </citation>
    <scope>X-RAY CRYSTALLOGRAPHY (2.0 ANGSTROMS)</scope>
</reference>
<name>CSLA_PEDHD</name>
<feature type="signal peptide">
    <location>
        <begin position="1"/>
        <end position="22"/>
    </location>
</feature>
<feature type="chain" id="PRO_0000024927" description="Chondroitinase-AC">
    <location>
        <begin position="23"/>
        <end position="700"/>
    </location>
</feature>
<feature type="active site">
    <location>
        <position position="225"/>
    </location>
</feature>
<feature type="active site">
    <location>
        <position position="234"/>
    </location>
</feature>
<feature type="active site">
    <location>
        <position position="288"/>
    </location>
</feature>
<feature type="binding site">
    <location>
        <position position="405"/>
    </location>
    <ligand>
        <name>Ca(2+)</name>
        <dbReference type="ChEBI" id="CHEBI:29108"/>
    </ligand>
</feature>
<feature type="binding site">
    <location>
        <position position="407"/>
    </location>
    <ligand>
        <name>Ca(2+)</name>
        <dbReference type="ChEBI" id="CHEBI:29108"/>
    </ligand>
</feature>
<feature type="binding site">
    <location>
        <position position="416"/>
    </location>
    <ligand>
        <name>Ca(2+)</name>
        <dbReference type="ChEBI" id="CHEBI:29108"/>
    </ligand>
</feature>
<feature type="binding site">
    <location>
        <position position="417"/>
    </location>
    <ligand>
        <name>Ca(2+)</name>
        <dbReference type="ChEBI" id="CHEBI:29108"/>
    </ligand>
</feature>
<feature type="glycosylation site" description="O-linked (Man...) serine">
    <location>
        <position position="328"/>
    </location>
</feature>
<feature type="glycosylation site" description="O-linked (Man...) serine">
    <location>
        <position position="455"/>
    </location>
</feature>
<feature type="helix" evidence="2">
    <location>
        <begin position="27"/>
        <end position="39"/>
    </location>
</feature>
<feature type="helix" evidence="2">
    <location>
        <begin position="46"/>
        <end position="56"/>
    </location>
</feature>
<feature type="strand" evidence="2">
    <location>
        <begin position="73"/>
        <end position="75"/>
    </location>
</feature>
<feature type="helix" evidence="2">
    <location>
        <begin position="79"/>
        <end position="93"/>
    </location>
</feature>
<feature type="turn" evidence="2">
    <location>
        <begin position="98"/>
        <end position="101"/>
    </location>
</feature>
<feature type="helix" evidence="2">
    <location>
        <begin position="103"/>
        <end position="119"/>
    </location>
</feature>
<feature type="helix" evidence="2">
    <location>
        <begin position="126"/>
        <end position="130"/>
    </location>
</feature>
<feature type="helix" evidence="2">
    <location>
        <begin position="132"/>
        <end position="143"/>
    </location>
</feature>
<feature type="helix" evidence="2">
    <location>
        <begin position="144"/>
        <end position="146"/>
    </location>
</feature>
<feature type="strand" evidence="2">
    <location>
        <begin position="147"/>
        <end position="149"/>
    </location>
</feature>
<feature type="helix" evidence="2">
    <location>
        <begin position="153"/>
        <end position="161"/>
    </location>
</feature>
<feature type="helix" evidence="2">
    <location>
        <begin position="168"/>
        <end position="170"/>
    </location>
</feature>
<feature type="helix" evidence="2">
    <location>
        <begin position="173"/>
        <end position="189"/>
    </location>
</feature>
<feature type="helix" evidence="2">
    <location>
        <begin position="193"/>
        <end position="204"/>
    </location>
</feature>
<feature type="strand" evidence="2">
    <location>
        <begin position="207"/>
        <end position="217"/>
    </location>
</feature>
<feature type="strand" evidence="2">
    <location>
        <begin position="225"/>
        <end position="227"/>
    </location>
</feature>
<feature type="turn" evidence="2">
    <location>
        <begin position="231"/>
        <end position="233"/>
    </location>
</feature>
<feature type="helix" evidence="2">
    <location>
        <begin position="234"/>
        <end position="249"/>
    </location>
</feature>
<feature type="helix" evidence="2">
    <location>
        <begin position="258"/>
        <end position="270"/>
    </location>
</feature>
<feature type="helix" evidence="2">
    <location>
        <begin position="273"/>
        <end position="275"/>
    </location>
</feature>
<feature type="helix" evidence="2">
    <location>
        <begin position="283"/>
        <end position="285"/>
    </location>
</feature>
<feature type="helix" evidence="2">
    <location>
        <begin position="287"/>
        <end position="291"/>
    </location>
</feature>
<feature type="turn" evidence="2">
    <location>
        <begin position="293"/>
        <end position="296"/>
    </location>
</feature>
<feature type="helix" evidence="2">
    <location>
        <begin position="299"/>
        <end position="301"/>
    </location>
</feature>
<feature type="helix" evidence="2">
    <location>
        <begin position="302"/>
        <end position="311"/>
    </location>
</feature>
<feature type="helix" evidence="2">
    <location>
        <begin position="313"/>
        <end position="315"/>
    </location>
</feature>
<feature type="helix" evidence="2">
    <location>
        <begin position="316"/>
        <end position="326"/>
    </location>
</feature>
<feature type="turn" evidence="2">
    <location>
        <begin position="332"/>
        <end position="335"/>
    </location>
</feature>
<feature type="strand" evidence="2">
    <location>
        <begin position="339"/>
        <end position="343"/>
    </location>
</feature>
<feature type="turn" evidence="2">
    <location>
        <begin position="344"/>
        <end position="347"/>
    </location>
</feature>
<feature type="strand" evidence="2">
    <location>
        <begin position="348"/>
        <end position="353"/>
    </location>
</feature>
<feature type="strand" evidence="2">
    <location>
        <begin position="356"/>
        <end position="361"/>
    </location>
</feature>
<feature type="turn" evidence="2">
    <location>
        <begin position="381"/>
        <end position="384"/>
    </location>
</feature>
<feature type="strand" evidence="2">
    <location>
        <begin position="385"/>
        <end position="394"/>
    </location>
</feature>
<feature type="helix" evidence="2">
    <location>
        <begin position="395"/>
        <end position="397"/>
    </location>
</feature>
<feature type="helix" evidence="2">
    <location>
        <begin position="401"/>
        <end position="403"/>
    </location>
</feature>
<feature type="helix" evidence="3">
    <location>
        <begin position="406"/>
        <end position="408"/>
    </location>
</feature>
<feature type="strand" evidence="2">
    <location>
        <begin position="413"/>
        <end position="415"/>
    </location>
</feature>
<feature type="strand" evidence="2">
    <location>
        <begin position="425"/>
        <end position="427"/>
    </location>
</feature>
<feature type="strand" evidence="2">
    <location>
        <begin position="436"/>
        <end position="440"/>
    </location>
</feature>
<feature type="strand" evidence="2">
    <location>
        <begin position="445"/>
        <end position="453"/>
    </location>
</feature>
<feature type="strand" evidence="2">
    <location>
        <begin position="456"/>
        <end position="464"/>
    </location>
</feature>
<feature type="strand" evidence="2">
    <location>
        <begin position="469"/>
        <end position="478"/>
    </location>
</feature>
<feature type="strand" evidence="2">
    <location>
        <begin position="480"/>
        <end position="492"/>
    </location>
</feature>
<feature type="strand" evidence="2">
    <location>
        <begin position="497"/>
        <end position="499"/>
    </location>
</feature>
<feature type="strand" evidence="2">
    <location>
        <begin position="502"/>
        <end position="504"/>
    </location>
</feature>
<feature type="strand" evidence="2">
    <location>
        <begin position="509"/>
        <end position="514"/>
    </location>
</feature>
<feature type="strand" evidence="2">
    <location>
        <begin position="519"/>
        <end position="522"/>
    </location>
</feature>
<feature type="strand" evidence="2">
    <location>
        <begin position="525"/>
        <end position="528"/>
    </location>
</feature>
<feature type="strand" evidence="2">
    <location>
        <begin position="533"/>
        <end position="538"/>
    </location>
</feature>
<feature type="strand" evidence="2">
    <location>
        <begin position="541"/>
        <end position="546"/>
    </location>
</feature>
<feature type="turn" evidence="2">
    <location>
        <begin position="547"/>
        <end position="549"/>
    </location>
</feature>
<feature type="strand" evidence="2">
    <location>
        <begin position="557"/>
        <end position="572"/>
    </location>
</feature>
<feature type="strand" evidence="2">
    <location>
        <begin position="574"/>
        <end position="584"/>
    </location>
</feature>
<feature type="helix" evidence="2">
    <location>
        <begin position="590"/>
        <end position="593"/>
    </location>
</feature>
<feature type="helix" evidence="2">
    <location>
        <begin position="596"/>
        <end position="598"/>
    </location>
</feature>
<feature type="strand" evidence="2">
    <location>
        <begin position="601"/>
        <end position="614"/>
    </location>
</feature>
<feature type="turn" evidence="2">
    <location>
        <begin position="615"/>
        <end position="618"/>
    </location>
</feature>
<feature type="strand" evidence="2">
    <location>
        <begin position="619"/>
        <end position="632"/>
    </location>
</feature>
<feature type="strand" evidence="2">
    <location>
        <begin position="635"/>
        <end position="641"/>
    </location>
</feature>
<feature type="strand" evidence="2">
    <location>
        <begin position="643"/>
        <end position="648"/>
    </location>
</feature>
<feature type="strand" evidence="2">
    <location>
        <begin position="655"/>
        <end position="659"/>
    </location>
</feature>
<feature type="strand" evidence="2">
    <location>
        <begin position="666"/>
        <end position="674"/>
    </location>
</feature>
<feature type="turn" evidence="2">
    <location>
        <begin position="675"/>
        <end position="677"/>
    </location>
</feature>
<feature type="strand" evidence="2">
    <location>
        <begin position="680"/>
        <end position="686"/>
    </location>
</feature>
<feature type="helix" evidence="2">
    <location>
        <begin position="690"/>
        <end position="692"/>
    </location>
</feature>
<accession>Q59288</accession>
<accession>C6Y215</accession>
<keyword id="KW-0002">3D-structure</keyword>
<keyword id="KW-0106">Calcium</keyword>
<keyword id="KW-0325">Glycoprotein</keyword>
<keyword id="KW-0456">Lyase</keyword>
<keyword id="KW-0479">Metal-binding</keyword>
<keyword id="KW-1185">Reference proteome</keyword>
<keyword id="KW-0732">Signal</keyword>
<gene>
    <name type="primary">cslA</name>
    <name type="synonym">chnAC</name>
    <name type="ordered locus">Phep_0786</name>
</gene>
<comment type="catalytic activity">
    <reaction>
        <text>Eliminative degradation of polysaccharides containing 1,4-beta-D-hexosaminyl and 1,3-beta-D-glucuronosyl linkages to disaccharides containing 4-deoxy-beta-D-gluc-4-enuronosyl groups.</text>
        <dbReference type="EC" id="4.2.2.5"/>
    </reaction>
</comment>
<comment type="cofactor">
    <cofactor>
        <name>Ca(2+)</name>
        <dbReference type="ChEBI" id="CHEBI:29108"/>
    </cofactor>
    <text>Binds 1 Ca(2+) ion per subunit.</text>
</comment>
<comment type="subunit">
    <text>Monomer.</text>
</comment>
<comment type="similarity">
    <text evidence="1">Belongs to the polysaccharide lyase 8 family.</text>
</comment>
<sequence length="700" mass="79694">MKKLFVTCIVFFSILSPALLIAQQTGTAELIMKRVMLDLKKPLRNMDKVAEKNLNTLQPDGSWKDVPYKDDAMTNWLPNNHLLQLETIIQAYIEKDSHYYGDDKVFDQISKAFKYWYDSDPKSRNWWHNEIATPQALGEMLILMRYGKKPLDEALVHKLTERMKRGEPEKKTGANKTDIALHYFYRALLTSDEALLSFAVKELFYPVQFVHYEEGLQYDYSYLQHGPQLQISSYGAVFITGVLKLANYVRDTPYALSTEKLAIFSKYYRDSYLKAIRGSYMDFNVEGRGVSRPDILNKKAEKKRLLVAKMIDLKHTEEWADAIARTDSTVAAGYKIEPYHHQFWNGDYVQHLRPAYSFNVRMVSKRTRRSESGNKENLLGRYLSDGATNIQLRGPEYYNIMPVWEWDKIPGITSRDYLTDRPLTKLWGEQGSNDFAGGVSDGVYGASAYALDYDSLQAKKAWFFFDKEIVCLGAGINSNAPENITTTLNQSWLNGPVISTAGKTGRGKITTFKAQGQFWLLHDAIGYYFPEGANLSLSTQSQKGNWFHINNSHSKDEVSGDVFKLWINHGARPENAQYAYIVLPGINKPEEIKKYNGTAPKVLANTNQLQAVYHQQLDMVQAIFYTAGKLSVAGIEIETDKPCAVLIKHINGKQVIWAADPLQKEKTAVLSIRDLKTGKTNRVKIDFPQQEFAGATVELK</sequence>
<dbReference type="EC" id="4.2.2.5"/>
<dbReference type="EMBL" id="U27583">
    <property type="protein sequence ID" value="AAC83383.1"/>
    <property type="molecule type" value="Genomic_DNA"/>
</dbReference>
<dbReference type="EMBL" id="CP001681">
    <property type="protein sequence ID" value="ACU03008.1"/>
    <property type="molecule type" value="Genomic_DNA"/>
</dbReference>
<dbReference type="RefSeq" id="WP_012780954.1">
    <property type="nucleotide sequence ID" value="NC_013061.1"/>
</dbReference>
<dbReference type="PDB" id="1CB8">
    <property type="method" value="X-ray"/>
    <property type="resolution" value="1.90 A"/>
    <property type="chains" value="A=23-700"/>
</dbReference>
<dbReference type="PDB" id="1HM2">
    <property type="method" value="X-ray"/>
    <property type="resolution" value="2.00 A"/>
    <property type="chains" value="A=1-700"/>
</dbReference>
<dbReference type="PDB" id="1HM3">
    <property type="method" value="X-ray"/>
    <property type="resolution" value="2.10 A"/>
    <property type="chains" value="A=1-700"/>
</dbReference>
<dbReference type="PDB" id="1HMU">
    <property type="method" value="X-ray"/>
    <property type="resolution" value="2.00 A"/>
    <property type="chains" value="A=1-700"/>
</dbReference>
<dbReference type="PDB" id="1HMW">
    <property type="method" value="X-ray"/>
    <property type="resolution" value="2.30 A"/>
    <property type="chains" value="A=1-700"/>
</dbReference>
<dbReference type="PDBsum" id="1CB8"/>
<dbReference type="PDBsum" id="1HM2"/>
<dbReference type="PDBsum" id="1HM3"/>
<dbReference type="PDBsum" id="1HMU"/>
<dbReference type="PDBsum" id="1HMW"/>
<dbReference type="SMR" id="Q59288"/>
<dbReference type="STRING" id="485917.Phep_0786"/>
<dbReference type="DrugBank" id="DB01872">
    <property type="generic name" value="2-deoxy-2-acetamido-beta-D-galactose-4-sulfate"/>
</dbReference>
<dbReference type="DrugBank" id="DB03863">
    <property type="generic name" value="2-O-Methyl-beta-L-fucopyranose"/>
</dbReference>
<dbReference type="DrugBank" id="DB02305">
    <property type="generic name" value="4,5-Dehydro-D-Glucuronic Acid"/>
</dbReference>
<dbReference type="DrugBank" id="DB03569">
    <property type="generic name" value="4,5-Dehydro-L-Iduronic Acid"/>
</dbReference>
<dbReference type="DrugBank" id="DB03389">
    <property type="generic name" value="alpha-D-Xylopyranose"/>
</dbReference>
<dbReference type="DrugBank" id="DB02945">
    <property type="generic name" value="alpha-L-iduronic acid"/>
</dbReference>
<dbReference type="DrugBank" id="DB03879">
    <property type="generic name" value="alpha-L-methyl-fucose"/>
</dbReference>
<dbReference type="DrugBank" id="DB03156">
    <property type="generic name" value="beta-D-glucuronic acid"/>
</dbReference>
<dbReference type="DrugBank" id="DB02186">
    <property type="generic name" value="N-acetyl-beta-D-galactosamine 6-sulfate"/>
</dbReference>
<dbReference type="CAZy" id="PL8">
    <property type="family name" value="Polysaccharide Lyase Family 8"/>
</dbReference>
<dbReference type="GlyCosmos" id="Q59288">
    <property type="glycosylation" value="2 sites, No reported glycans"/>
</dbReference>
<dbReference type="KEGG" id="phe:Phep_0786"/>
<dbReference type="eggNOG" id="COG5492">
    <property type="taxonomic scope" value="Bacteria"/>
</dbReference>
<dbReference type="HOGENOM" id="CLU_004172_2_1_10"/>
<dbReference type="OrthoDB" id="6394136at2"/>
<dbReference type="BioCyc" id="MetaCyc:MONOMER-15799"/>
<dbReference type="BRENDA" id="4.2.2.5">
    <property type="organism ID" value="2286"/>
</dbReference>
<dbReference type="EvolutionaryTrace" id="Q59288"/>
<dbReference type="Proteomes" id="UP000000852">
    <property type="component" value="Chromosome"/>
</dbReference>
<dbReference type="GO" id="GO:0005576">
    <property type="term" value="C:extracellular region"/>
    <property type="evidence" value="ECO:0007669"/>
    <property type="project" value="InterPro"/>
</dbReference>
<dbReference type="GO" id="GO:0030246">
    <property type="term" value="F:carbohydrate binding"/>
    <property type="evidence" value="ECO:0007669"/>
    <property type="project" value="InterPro"/>
</dbReference>
<dbReference type="GO" id="GO:0030341">
    <property type="term" value="F:chondroitin AC lyase activity"/>
    <property type="evidence" value="ECO:0007669"/>
    <property type="project" value="UniProtKB-EC"/>
</dbReference>
<dbReference type="GO" id="GO:0046872">
    <property type="term" value="F:metal ion binding"/>
    <property type="evidence" value="ECO:0007669"/>
    <property type="project" value="UniProtKB-KW"/>
</dbReference>
<dbReference type="GO" id="GO:0005975">
    <property type="term" value="P:carbohydrate metabolic process"/>
    <property type="evidence" value="ECO:0007669"/>
    <property type="project" value="InterPro"/>
</dbReference>
<dbReference type="CDD" id="cd01083">
    <property type="entry name" value="GAG_Lyase"/>
    <property type="match status" value="1"/>
</dbReference>
<dbReference type="Gene3D" id="2.70.98.10">
    <property type="match status" value="1"/>
</dbReference>
<dbReference type="Gene3D" id="1.50.10.100">
    <property type="entry name" value="Chondroitin AC/alginate lyase"/>
    <property type="match status" value="1"/>
</dbReference>
<dbReference type="Gene3D" id="2.60.220.10">
    <property type="entry name" value="Polysaccharide lyase family 8-like, C-terminal"/>
    <property type="match status" value="1"/>
</dbReference>
<dbReference type="InterPro" id="IPR054982">
    <property type="entry name" value="ChondaseAC"/>
</dbReference>
<dbReference type="InterPro" id="IPR008929">
    <property type="entry name" value="Chondroitin_lyas"/>
</dbReference>
<dbReference type="InterPro" id="IPR011013">
    <property type="entry name" value="Gal_mutarotase_sf_dom"/>
</dbReference>
<dbReference type="InterPro" id="IPR014718">
    <property type="entry name" value="GH-type_carb-bd"/>
</dbReference>
<dbReference type="InterPro" id="IPR038970">
    <property type="entry name" value="Lyase_8"/>
</dbReference>
<dbReference type="InterPro" id="IPR011071">
    <property type="entry name" value="Lyase_8-like_C"/>
</dbReference>
<dbReference type="InterPro" id="IPR012970">
    <property type="entry name" value="Lyase_8_alpha_N"/>
</dbReference>
<dbReference type="InterPro" id="IPR004103">
    <property type="entry name" value="Lyase_8_C"/>
</dbReference>
<dbReference type="InterPro" id="IPR003159">
    <property type="entry name" value="Lyase_8_central_dom"/>
</dbReference>
<dbReference type="NCBIfam" id="NF043001">
    <property type="entry name" value="chondaseAC"/>
    <property type="match status" value="1"/>
</dbReference>
<dbReference type="PANTHER" id="PTHR38481">
    <property type="entry name" value="HYALURONATE LYASE"/>
    <property type="match status" value="1"/>
</dbReference>
<dbReference type="PANTHER" id="PTHR38481:SF1">
    <property type="entry name" value="HYALURONATE LYASE"/>
    <property type="match status" value="1"/>
</dbReference>
<dbReference type="Pfam" id="PF02278">
    <property type="entry name" value="Lyase_8"/>
    <property type="match status" value="1"/>
</dbReference>
<dbReference type="Pfam" id="PF02884">
    <property type="entry name" value="Lyase_8_C"/>
    <property type="match status" value="1"/>
</dbReference>
<dbReference type="Pfam" id="PF08124">
    <property type="entry name" value="Lyase_8_N"/>
    <property type="match status" value="1"/>
</dbReference>
<dbReference type="SUPFAM" id="SSF48230">
    <property type="entry name" value="Chondroitin AC/alginate lyase"/>
    <property type="match status" value="1"/>
</dbReference>
<dbReference type="SUPFAM" id="SSF74650">
    <property type="entry name" value="Galactose mutarotase-like"/>
    <property type="match status" value="1"/>
</dbReference>
<dbReference type="SUPFAM" id="SSF49863">
    <property type="entry name" value="Hyaluronate lyase-like, C-terminal domain"/>
    <property type="match status" value="1"/>
</dbReference>
<proteinExistence type="evidence at protein level"/>